<organism>
    <name type="scientific">Microcystis aeruginosa (strain NIES-843 / IAM M-2473)</name>
    <dbReference type="NCBI Taxonomy" id="449447"/>
    <lineage>
        <taxon>Bacteria</taxon>
        <taxon>Bacillati</taxon>
        <taxon>Cyanobacteriota</taxon>
        <taxon>Cyanophyceae</taxon>
        <taxon>Oscillatoriophycideae</taxon>
        <taxon>Chroococcales</taxon>
        <taxon>Microcystaceae</taxon>
        <taxon>Microcystis</taxon>
    </lineage>
</organism>
<evidence type="ECO:0000255" key="1">
    <source>
        <dbReference type="HAMAP-Rule" id="MF_01855"/>
    </source>
</evidence>
<keyword id="KW-0113">Calvin cycle</keyword>
<keyword id="KW-0119">Carbohydrate metabolism</keyword>
<keyword id="KW-0963">Cytoplasm</keyword>
<keyword id="KW-0378">Hydrolase</keyword>
<keyword id="KW-0460">Magnesium</keyword>
<keyword id="KW-0479">Metal-binding</keyword>
<feature type="chain" id="PRO_0000364604" description="Fructose-1,6-bisphosphatase class 1">
    <location>
        <begin position="1"/>
        <end position="348"/>
    </location>
</feature>
<feature type="binding site" evidence="1">
    <location>
        <position position="107"/>
    </location>
    <ligand>
        <name>Mg(2+)</name>
        <dbReference type="ChEBI" id="CHEBI:18420"/>
        <label>1</label>
    </ligand>
</feature>
<feature type="binding site" evidence="1">
    <location>
        <position position="129"/>
    </location>
    <ligand>
        <name>Mg(2+)</name>
        <dbReference type="ChEBI" id="CHEBI:18420"/>
        <label>1</label>
    </ligand>
</feature>
<feature type="binding site" evidence="1">
    <location>
        <position position="129"/>
    </location>
    <ligand>
        <name>Mg(2+)</name>
        <dbReference type="ChEBI" id="CHEBI:18420"/>
        <label>2</label>
    </ligand>
</feature>
<feature type="binding site" evidence="1">
    <location>
        <position position="131"/>
    </location>
    <ligand>
        <name>Mg(2+)</name>
        <dbReference type="ChEBI" id="CHEBI:18420"/>
        <label>1</label>
    </ligand>
</feature>
<feature type="binding site" evidence="1">
    <location>
        <begin position="132"/>
        <end position="135"/>
    </location>
    <ligand>
        <name>substrate</name>
    </ligand>
</feature>
<feature type="binding site" evidence="1">
    <location>
        <position position="132"/>
    </location>
    <ligand>
        <name>Mg(2+)</name>
        <dbReference type="ChEBI" id="CHEBI:18420"/>
        <label>2</label>
    </ligand>
</feature>
<feature type="binding site" evidence="1">
    <location>
        <position position="224"/>
    </location>
    <ligand>
        <name>substrate</name>
    </ligand>
</feature>
<feature type="binding site" evidence="1">
    <location>
        <position position="252"/>
    </location>
    <ligand>
        <name>substrate</name>
    </ligand>
</feature>
<feature type="binding site" evidence="1">
    <location>
        <position position="282"/>
    </location>
    <ligand>
        <name>substrate</name>
    </ligand>
</feature>
<feature type="binding site" evidence="1">
    <location>
        <position position="288"/>
    </location>
    <ligand>
        <name>Mg(2+)</name>
        <dbReference type="ChEBI" id="CHEBI:18420"/>
        <label>2</label>
    </ligand>
</feature>
<name>F16PA_MICAN</name>
<protein>
    <recommendedName>
        <fullName evidence="1">Fructose-1,6-bisphosphatase class 1</fullName>
        <shortName evidence="1">FBPase class 1</shortName>
        <ecNumber evidence="1">3.1.3.11</ecNumber>
    </recommendedName>
    <alternativeName>
        <fullName evidence="1">D-fructose-1,6-bisphosphate 1-phosphohydrolase class 1</fullName>
    </alternativeName>
</protein>
<sequence length="348" mass="38721">MVSNIPFSIPEHSLDRDCTTLSRHVLQQLQSFSSDAQDLSAIMSRIALAGKLIARRLSKAGLMADVLGFTGETNVQGESVKKMDVFANEVFISVFKQSGLVCRLASEEMDKPYYIPENCPIGRYTLLYDPIDGSSNVDINLNVGSIFAIRQQEDNDLDGEARDLLQNGRKQIAAGYILYGPSTILVYSIGRGVHAFVLDPSLGEFILAQENIIIPDHGPIYSTNEGNFWQWDEAIRDYTRYVHRHDGYTARYSGALVGDIHRILMQGGVFLYPGTVKNPQGKLRLIYETAPLAFLIEQAGGKASDGVTNLLDIVPDKLHYRTPLVIGSVEDVKLVESFIADRRHRDRV</sequence>
<reference key="1">
    <citation type="journal article" date="2007" name="DNA Res.">
        <title>Complete genomic structure of the bloom-forming toxic cyanobacterium Microcystis aeruginosa NIES-843.</title>
        <authorList>
            <person name="Kaneko T."/>
            <person name="Nakajima N."/>
            <person name="Okamoto S."/>
            <person name="Suzuki I."/>
            <person name="Tanabe Y."/>
            <person name="Tamaoki M."/>
            <person name="Nakamura Y."/>
            <person name="Kasai F."/>
            <person name="Watanabe A."/>
            <person name="Kawashima K."/>
            <person name="Kishida Y."/>
            <person name="Ono A."/>
            <person name="Shimizu Y."/>
            <person name="Takahashi C."/>
            <person name="Minami C."/>
            <person name="Fujishiro T."/>
            <person name="Kohara M."/>
            <person name="Katoh M."/>
            <person name="Nakazaki N."/>
            <person name="Nakayama S."/>
            <person name="Yamada M."/>
            <person name="Tabata S."/>
            <person name="Watanabe M.M."/>
        </authorList>
    </citation>
    <scope>NUCLEOTIDE SEQUENCE [LARGE SCALE GENOMIC DNA]</scope>
    <source>
        <strain>NIES-843 / IAM M-247</strain>
    </source>
</reference>
<gene>
    <name evidence="1" type="primary">fbp</name>
    <name type="ordered locus">MAE_23860</name>
</gene>
<comment type="catalytic activity">
    <reaction evidence="1">
        <text>beta-D-fructose 1,6-bisphosphate + H2O = beta-D-fructose 6-phosphate + phosphate</text>
        <dbReference type="Rhea" id="RHEA:11064"/>
        <dbReference type="ChEBI" id="CHEBI:15377"/>
        <dbReference type="ChEBI" id="CHEBI:32966"/>
        <dbReference type="ChEBI" id="CHEBI:43474"/>
        <dbReference type="ChEBI" id="CHEBI:57634"/>
        <dbReference type="EC" id="3.1.3.11"/>
    </reaction>
</comment>
<comment type="cofactor">
    <cofactor evidence="1">
        <name>Mg(2+)</name>
        <dbReference type="ChEBI" id="CHEBI:18420"/>
    </cofactor>
    <text evidence="1">Binds 2 magnesium ions per subunit.</text>
</comment>
<comment type="pathway">
    <text evidence="1">Carbohydrate biosynthesis; Calvin cycle.</text>
</comment>
<comment type="subunit">
    <text evidence="1">Homotetramer.</text>
</comment>
<comment type="subcellular location">
    <subcellularLocation>
        <location evidence="1">Cytoplasm</location>
    </subcellularLocation>
</comment>
<comment type="similarity">
    <text evidence="1">Belongs to the FBPase class 1 family.</text>
</comment>
<dbReference type="EC" id="3.1.3.11" evidence="1"/>
<dbReference type="EMBL" id="AP009552">
    <property type="protein sequence ID" value="BAG02208.1"/>
    <property type="molecule type" value="Genomic_DNA"/>
</dbReference>
<dbReference type="RefSeq" id="WP_012265536.1">
    <property type="nucleotide sequence ID" value="NC_010296.1"/>
</dbReference>
<dbReference type="SMR" id="B0JH56"/>
<dbReference type="STRING" id="449447.MAE_23860"/>
<dbReference type="PaxDb" id="449447-MAE_23860"/>
<dbReference type="EnsemblBacteria" id="BAG02208">
    <property type="protein sequence ID" value="BAG02208"/>
    <property type="gene ID" value="MAE_23860"/>
</dbReference>
<dbReference type="KEGG" id="mar:MAE_23860"/>
<dbReference type="PATRIC" id="fig|449447.4.peg.2181"/>
<dbReference type="eggNOG" id="COG0158">
    <property type="taxonomic scope" value="Bacteria"/>
</dbReference>
<dbReference type="HOGENOM" id="CLU_039977_2_2_3"/>
<dbReference type="BioCyc" id="MAER449447:MAE_RS10400-MONOMER"/>
<dbReference type="UniPathway" id="UPA00116"/>
<dbReference type="Proteomes" id="UP000001510">
    <property type="component" value="Chromosome"/>
</dbReference>
<dbReference type="GO" id="GO:0005829">
    <property type="term" value="C:cytosol"/>
    <property type="evidence" value="ECO:0007669"/>
    <property type="project" value="TreeGrafter"/>
</dbReference>
<dbReference type="GO" id="GO:0042132">
    <property type="term" value="F:fructose 1,6-bisphosphate 1-phosphatase activity"/>
    <property type="evidence" value="ECO:0007669"/>
    <property type="project" value="UniProtKB-UniRule"/>
</dbReference>
<dbReference type="GO" id="GO:0000287">
    <property type="term" value="F:magnesium ion binding"/>
    <property type="evidence" value="ECO:0007669"/>
    <property type="project" value="UniProtKB-UniRule"/>
</dbReference>
<dbReference type="GO" id="GO:0030388">
    <property type="term" value="P:fructose 1,6-bisphosphate metabolic process"/>
    <property type="evidence" value="ECO:0007669"/>
    <property type="project" value="TreeGrafter"/>
</dbReference>
<dbReference type="GO" id="GO:0006002">
    <property type="term" value="P:fructose 6-phosphate metabolic process"/>
    <property type="evidence" value="ECO:0007669"/>
    <property type="project" value="TreeGrafter"/>
</dbReference>
<dbReference type="GO" id="GO:0006000">
    <property type="term" value="P:fructose metabolic process"/>
    <property type="evidence" value="ECO:0007669"/>
    <property type="project" value="TreeGrafter"/>
</dbReference>
<dbReference type="GO" id="GO:0006094">
    <property type="term" value="P:gluconeogenesis"/>
    <property type="evidence" value="ECO:0007669"/>
    <property type="project" value="UniProtKB-UniRule"/>
</dbReference>
<dbReference type="GO" id="GO:0019253">
    <property type="term" value="P:reductive pentose-phosphate cycle"/>
    <property type="evidence" value="ECO:0007669"/>
    <property type="project" value="UniProtKB-UniRule"/>
</dbReference>
<dbReference type="GO" id="GO:0005986">
    <property type="term" value="P:sucrose biosynthetic process"/>
    <property type="evidence" value="ECO:0007669"/>
    <property type="project" value="TreeGrafter"/>
</dbReference>
<dbReference type="CDD" id="cd00354">
    <property type="entry name" value="FBPase"/>
    <property type="match status" value="1"/>
</dbReference>
<dbReference type="FunFam" id="3.30.540.10:FF:000002">
    <property type="entry name" value="Fructose-1,6-bisphosphatase class 1"/>
    <property type="match status" value="1"/>
</dbReference>
<dbReference type="Gene3D" id="3.40.190.80">
    <property type="match status" value="1"/>
</dbReference>
<dbReference type="Gene3D" id="3.30.540.10">
    <property type="entry name" value="Fructose-1,6-Bisphosphatase, subunit A, domain 1"/>
    <property type="match status" value="1"/>
</dbReference>
<dbReference type="HAMAP" id="MF_01855">
    <property type="entry name" value="FBPase_class1"/>
    <property type="match status" value="1"/>
</dbReference>
<dbReference type="InterPro" id="IPR044015">
    <property type="entry name" value="FBPase_C_dom"/>
</dbReference>
<dbReference type="InterPro" id="IPR000146">
    <property type="entry name" value="FBPase_class-1"/>
</dbReference>
<dbReference type="InterPro" id="IPR033391">
    <property type="entry name" value="FBPase_N"/>
</dbReference>
<dbReference type="InterPro" id="IPR028343">
    <property type="entry name" value="FBPtase"/>
</dbReference>
<dbReference type="InterPro" id="IPR020548">
    <property type="entry name" value="Fructose_bisphosphatase_AS"/>
</dbReference>
<dbReference type="NCBIfam" id="NF006778">
    <property type="entry name" value="PRK09293.1-1"/>
    <property type="match status" value="1"/>
</dbReference>
<dbReference type="PANTHER" id="PTHR11556">
    <property type="entry name" value="FRUCTOSE-1,6-BISPHOSPHATASE-RELATED"/>
    <property type="match status" value="1"/>
</dbReference>
<dbReference type="PANTHER" id="PTHR11556:SF35">
    <property type="entry name" value="SEDOHEPTULOSE-1,7-BISPHOSPHATASE, CHLOROPLASTIC"/>
    <property type="match status" value="1"/>
</dbReference>
<dbReference type="Pfam" id="PF00316">
    <property type="entry name" value="FBPase"/>
    <property type="match status" value="1"/>
</dbReference>
<dbReference type="Pfam" id="PF18913">
    <property type="entry name" value="FBPase_C"/>
    <property type="match status" value="1"/>
</dbReference>
<dbReference type="PIRSF" id="PIRSF500210">
    <property type="entry name" value="FBPtase"/>
    <property type="match status" value="1"/>
</dbReference>
<dbReference type="PIRSF" id="PIRSF000904">
    <property type="entry name" value="FBPtase_SBPase"/>
    <property type="match status" value="1"/>
</dbReference>
<dbReference type="PRINTS" id="PR00115">
    <property type="entry name" value="F16BPHPHTASE"/>
</dbReference>
<dbReference type="SUPFAM" id="SSF56655">
    <property type="entry name" value="Carbohydrate phosphatase"/>
    <property type="match status" value="1"/>
</dbReference>
<dbReference type="PROSITE" id="PS00124">
    <property type="entry name" value="FBPASE"/>
    <property type="match status" value="1"/>
</dbReference>
<accession>B0JH56</accession>
<proteinExistence type="inferred from homology"/>